<gene>
    <name evidence="1" type="primary">obg</name>
    <name type="ordered locus">tll2353</name>
</gene>
<accession>Q8DGG4</accession>
<name>OBG_THEVB</name>
<evidence type="ECO:0000255" key="1">
    <source>
        <dbReference type="HAMAP-Rule" id="MF_01454"/>
    </source>
</evidence>
<evidence type="ECO:0000255" key="2">
    <source>
        <dbReference type="PROSITE-ProRule" id="PRU01231"/>
    </source>
</evidence>
<protein>
    <recommendedName>
        <fullName evidence="1">GTPase Obg</fullName>
        <ecNumber evidence="1">3.6.5.-</ecNumber>
    </recommendedName>
    <alternativeName>
        <fullName evidence="1">GTP-binding protein Obg</fullName>
    </alternativeName>
</protein>
<dbReference type="EC" id="3.6.5.-" evidence="1"/>
<dbReference type="EMBL" id="BA000039">
    <property type="protein sequence ID" value="BAC09905.1"/>
    <property type="molecule type" value="Genomic_DNA"/>
</dbReference>
<dbReference type="RefSeq" id="NP_683143.1">
    <property type="nucleotide sequence ID" value="NC_004113.1"/>
</dbReference>
<dbReference type="RefSeq" id="WP_011058186.1">
    <property type="nucleotide sequence ID" value="NC_004113.1"/>
</dbReference>
<dbReference type="SMR" id="Q8DGG4"/>
<dbReference type="STRING" id="197221.gene:10748972"/>
<dbReference type="EnsemblBacteria" id="BAC09905">
    <property type="protein sequence ID" value="BAC09905"/>
    <property type="gene ID" value="BAC09905"/>
</dbReference>
<dbReference type="KEGG" id="tel:tll2353"/>
<dbReference type="PATRIC" id="fig|197221.4.peg.2468"/>
<dbReference type="eggNOG" id="COG0536">
    <property type="taxonomic scope" value="Bacteria"/>
</dbReference>
<dbReference type="Proteomes" id="UP000000440">
    <property type="component" value="Chromosome"/>
</dbReference>
<dbReference type="GO" id="GO:0005737">
    <property type="term" value="C:cytoplasm"/>
    <property type="evidence" value="ECO:0007669"/>
    <property type="project" value="UniProtKB-SubCell"/>
</dbReference>
<dbReference type="GO" id="GO:0005525">
    <property type="term" value="F:GTP binding"/>
    <property type="evidence" value="ECO:0007669"/>
    <property type="project" value="UniProtKB-UniRule"/>
</dbReference>
<dbReference type="GO" id="GO:0003924">
    <property type="term" value="F:GTPase activity"/>
    <property type="evidence" value="ECO:0007669"/>
    <property type="project" value="UniProtKB-UniRule"/>
</dbReference>
<dbReference type="GO" id="GO:0000287">
    <property type="term" value="F:magnesium ion binding"/>
    <property type="evidence" value="ECO:0007669"/>
    <property type="project" value="InterPro"/>
</dbReference>
<dbReference type="GO" id="GO:0042254">
    <property type="term" value="P:ribosome biogenesis"/>
    <property type="evidence" value="ECO:0007669"/>
    <property type="project" value="UniProtKB-UniRule"/>
</dbReference>
<dbReference type="CDD" id="cd01898">
    <property type="entry name" value="Obg"/>
    <property type="match status" value="1"/>
</dbReference>
<dbReference type="FunFam" id="2.70.210.12:FF:000001">
    <property type="entry name" value="GTPase Obg"/>
    <property type="match status" value="1"/>
</dbReference>
<dbReference type="Gene3D" id="2.70.210.12">
    <property type="entry name" value="GTP1/OBG domain"/>
    <property type="match status" value="1"/>
</dbReference>
<dbReference type="Gene3D" id="3.40.50.300">
    <property type="entry name" value="P-loop containing nucleotide triphosphate hydrolases"/>
    <property type="match status" value="1"/>
</dbReference>
<dbReference type="HAMAP" id="MF_01454">
    <property type="entry name" value="GTPase_Obg"/>
    <property type="match status" value="1"/>
</dbReference>
<dbReference type="InterPro" id="IPR031167">
    <property type="entry name" value="G_OBG"/>
</dbReference>
<dbReference type="InterPro" id="IPR006073">
    <property type="entry name" value="GTP-bd"/>
</dbReference>
<dbReference type="InterPro" id="IPR014100">
    <property type="entry name" value="GTP-bd_Obg/CgtA"/>
</dbReference>
<dbReference type="InterPro" id="IPR006169">
    <property type="entry name" value="GTP1_OBG_dom"/>
</dbReference>
<dbReference type="InterPro" id="IPR036726">
    <property type="entry name" value="GTP1_OBG_dom_sf"/>
</dbReference>
<dbReference type="InterPro" id="IPR045086">
    <property type="entry name" value="OBG_GTPase"/>
</dbReference>
<dbReference type="InterPro" id="IPR027417">
    <property type="entry name" value="P-loop_NTPase"/>
</dbReference>
<dbReference type="NCBIfam" id="TIGR02729">
    <property type="entry name" value="Obg_CgtA"/>
    <property type="match status" value="1"/>
</dbReference>
<dbReference type="NCBIfam" id="NF008955">
    <property type="entry name" value="PRK12297.1"/>
    <property type="match status" value="1"/>
</dbReference>
<dbReference type="NCBIfam" id="NF008956">
    <property type="entry name" value="PRK12299.1"/>
    <property type="match status" value="1"/>
</dbReference>
<dbReference type="PANTHER" id="PTHR11702">
    <property type="entry name" value="DEVELOPMENTALLY REGULATED GTP-BINDING PROTEIN-RELATED"/>
    <property type="match status" value="1"/>
</dbReference>
<dbReference type="PANTHER" id="PTHR11702:SF31">
    <property type="entry name" value="MITOCHONDRIAL RIBOSOME-ASSOCIATED GTPASE 2"/>
    <property type="match status" value="1"/>
</dbReference>
<dbReference type="Pfam" id="PF01018">
    <property type="entry name" value="GTP1_OBG"/>
    <property type="match status" value="1"/>
</dbReference>
<dbReference type="Pfam" id="PF01926">
    <property type="entry name" value="MMR_HSR1"/>
    <property type="match status" value="1"/>
</dbReference>
<dbReference type="PIRSF" id="PIRSF002401">
    <property type="entry name" value="GTP_bd_Obg/CgtA"/>
    <property type="match status" value="1"/>
</dbReference>
<dbReference type="PRINTS" id="PR00326">
    <property type="entry name" value="GTP1OBG"/>
</dbReference>
<dbReference type="SUPFAM" id="SSF82051">
    <property type="entry name" value="Obg GTP-binding protein N-terminal domain"/>
    <property type="match status" value="1"/>
</dbReference>
<dbReference type="SUPFAM" id="SSF52540">
    <property type="entry name" value="P-loop containing nucleoside triphosphate hydrolases"/>
    <property type="match status" value="1"/>
</dbReference>
<dbReference type="PROSITE" id="PS51710">
    <property type="entry name" value="G_OBG"/>
    <property type="match status" value="1"/>
</dbReference>
<dbReference type="PROSITE" id="PS51883">
    <property type="entry name" value="OBG"/>
    <property type="match status" value="1"/>
</dbReference>
<sequence>MQFIDLAEIHVKAGKGGDGIIAFRREKYVPAGGPSGGNGGNGGSVILKAVSNLQTLLDFRYAHVFKAENGQRGGPNNRTGACGADLVIEVPCGTMVWDAETGELLGDLTTPGQTLLVAKGGKGGLGNKHFLSNHQRAPDYALPGLEGEERHLRLELKLLAEVGIIGLPNAGKSTLISVLSAARPKIADYPFTTLVPNLGVVRQPNGDGTVFADIPGLIAGAHTGLGLGHEFLRHIERTRLLLHLIDATAEDVVAAYQTIRDELVAYGHGLGDRPQIVALNKIDALDASQITTLQETLAAYVGQRVFAISAVARQGLEPLLEAVWQELGVSVSH</sequence>
<keyword id="KW-0963">Cytoplasm</keyword>
<keyword id="KW-0342">GTP-binding</keyword>
<keyword id="KW-0378">Hydrolase</keyword>
<keyword id="KW-0460">Magnesium</keyword>
<keyword id="KW-0479">Metal-binding</keyword>
<keyword id="KW-0547">Nucleotide-binding</keyword>
<keyword id="KW-1185">Reference proteome</keyword>
<reference key="1">
    <citation type="journal article" date="2002" name="DNA Res.">
        <title>Complete genome structure of the thermophilic cyanobacterium Thermosynechococcus elongatus BP-1.</title>
        <authorList>
            <person name="Nakamura Y."/>
            <person name="Kaneko T."/>
            <person name="Sato S."/>
            <person name="Ikeuchi M."/>
            <person name="Katoh H."/>
            <person name="Sasamoto S."/>
            <person name="Watanabe A."/>
            <person name="Iriguchi M."/>
            <person name="Kawashima K."/>
            <person name="Kimura T."/>
            <person name="Kishida Y."/>
            <person name="Kiyokawa C."/>
            <person name="Kohara M."/>
            <person name="Matsumoto M."/>
            <person name="Matsuno A."/>
            <person name="Nakazaki N."/>
            <person name="Shimpo S."/>
            <person name="Sugimoto M."/>
            <person name="Takeuchi C."/>
            <person name="Yamada M."/>
            <person name="Tabata S."/>
        </authorList>
    </citation>
    <scope>NUCLEOTIDE SEQUENCE [LARGE SCALE GENOMIC DNA]</scope>
    <source>
        <strain>NIES-2133 / IAM M-273 / BP-1</strain>
    </source>
</reference>
<comment type="function">
    <text evidence="1">An essential GTPase which binds GTP, GDP and possibly (p)ppGpp with moderate affinity, with high nucleotide exchange rates and a fairly low GTP hydrolysis rate. Plays a role in control of the cell cycle, stress response, ribosome biogenesis and in those bacteria that undergo differentiation, in morphogenesis control.</text>
</comment>
<comment type="cofactor">
    <cofactor evidence="1">
        <name>Mg(2+)</name>
        <dbReference type="ChEBI" id="CHEBI:18420"/>
    </cofactor>
</comment>
<comment type="subunit">
    <text evidence="1">Monomer.</text>
</comment>
<comment type="subcellular location">
    <subcellularLocation>
        <location evidence="1">Cytoplasm</location>
    </subcellularLocation>
</comment>
<comment type="similarity">
    <text evidence="1">Belongs to the TRAFAC class OBG-HflX-like GTPase superfamily. OBG GTPase family.</text>
</comment>
<proteinExistence type="inferred from homology"/>
<organism>
    <name type="scientific">Thermosynechococcus vestitus (strain NIES-2133 / IAM M-273 / BP-1)</name>
    <dbReference type="NCBI Taxonomy" id="197221"/>
    <lineage>
        <taxon>Bacteria</taxon>
        <taxon>Bacillati</taxon>
        <taxon>Cyanobacteriota</taxon>
        <taxon>Cyanophyceae</taxon>
        <taxon>Acaryochloridales</taxon>
        <taxon>Thermosynechococcaceae</taxon>
        <taxon>Thermosynechococcus</taxon>
    </lineage>
</organism>
<feature type="chain" id="PRO_0000386354" description="GTPase Obg">
    <location>
        <begin position="1"/>
        <end position="333"/>
    </location>
</feature>
<feature type="domain" description="Obg" evidence="2">
    <location>
        <begin position="1"/>
        <end position="159"/>
    </location>
</feature>
<feature type="domain" description="OBG-type G" evidence="1">
    <location>
        <begin position="160"/>
        <end position="328"/>
    </location>
</feature>
<feature type="binding site" evidence="1">
    <location>
        <begin position="166"/>
        <end position="173"/>
    </location>
    <ligand>
        <name>GTP</name>
        <dbReference type="ChEBI" id="CHEBI:37565"/>
    </ligand>
</feature>
<feature type="binding site" evidence="1">
    <location>
        <position position="173"/>
    </location>
    <ligand>
        <name>Mg(2+)</name>
        <dbReference type="ChEBI" id="CHEBI:18420"/>
    </ligand>
</feature>
<feature type="binding site" evidence="1">
    <location>
        <begin position="191"/>
        <end position="195"/>
    </location>
    <ligand>
        <name>GTP</name>
        <dbReference type="ChEBI" id="CHEBI:37565"/>
    </ligand>
</feature>
<feature type="binding site" evidence="1">
    <location>
        <position position="193"/>
    </location>
    <ligand>
        <name>Mg(2+)</name>
        <dbReference type="ChEBI" id="CHEBI:18420"/>
    </ligand>
</feature>
<feature type="binding site" evidence="1">
    <location>
        <begin position="213"/>
        <end position="216"/>
    </location>
    <ligand>
        <name>GTP</name>
        <dbReference type="ChEBI" id="CHEBI:37565"/>
    </ligand>
</feature>
<feature type="binding site" evidence="1">
    <location>
        <begin position="280"/>
        <end position="283"/>
    </location>
    <ligand>
        <name>GTP</name>
        <dbReference type="ChEBI" id="CHEBI:37565"/>
    </ligand>
</feature>
<feature type="binding site" evidence="1">
    <location>
        <begin position="309"/>
        <end position="311"/>
    </location>
    <ligand>
        <name>GTP</name>
        <dbReference type="ChEBI" id="CHEBI:37565"/>
    </ligand>
</feature>